<comment type="function">
    <text evidence="1">Catalyzes the decarboxylation of L-tyrosine to produce tyramine for methanofuran biosynthesis. Can also catalyze the decarboxylation of L-aspartate to produce beta-alanine for coenzyme A (CoA) biosynthesis.</text>
</comment>
<comment type="catalytic activity">
    <reaction evidence="1">
        <text>L-tyrosine + H(+) = tyramine + CO2</text>
        <dbReference type="Rhea" id="RHEA:14345"/>
        <dbReference type="ChEBI" id="CHEBI:15378"/>
        <dbReference type="ChEBI" id="CHEBI:16526"/>
        <dbReference type="ChEBI" id="CHEBI:58315"/>
        <dbReference type="ChEBI" id="CHEBI:327995"/>
        <dbReference type="EC" id="4.1.1.25"/>
    </reaction>
</comment>
<comment type="catalytic activity">
    <reaction evidence="1">
        <text>L-aspartate + H(+) = beta-alanine + CO2</text>
        <dbReference type="Rhea" id="RHEA:19497"/>
        <dbReference type="ChEBI" id="CHEBI:15378"/>
        <dbReference type="ChEBI" id="CHEBI:16526"/>
        <dbReference type="ChEBI" id="CHEBI:29991"/>
        <dbReference type="ChEBI" id="CHEBI:57966"/>
        <dbReference type="EC" id="4.1.1.11"/>
    </reaction>
</comment>
<comment type="cofactor">
    <cofactor evidence="1">
        <name>pyridoxal 5'-phosphate</name>
        <dbReference type="ChEBI" id="CHEBI:597326"/>
    </cofactor>
</comment>
<comment type="pathway">
    <text evidence="1">Cofactor biosynthesis; methanofuran biosynthesis.</text>
</comment>
<comment type="pathway">
    <text evidence="1">Cofactor biosynthesis; coenzyme A biosynthesis.</text>
</comment>
<comment type="similarity">
    <text evidence="1">Belongs to the group II decarboxylase family. MfnA subfamily.</text>
</comment>
<reference key="1">
    <citation type="journal article" date="2016" name="Stand. Genomic Sci.">
        <title>Complete genome sequence of Methanospirillum hungatei type strain JF1.</title>
        <authorList>
            <person name="Gunsalus R.P."/>
            <person name="Cook L.E."/>
            <person name="Crable B."/>
            <person name="Rohlin L."/>
            <person name="McDonald E."/>
            <person name="Mouttaki H."/>
            <person name="Sieber J.R."/>
            <person name="Poweleit N."/>
            <person name="Zhou H."/>
            <person name="Lapidus A.L."/>
            <person name="Daligault H.E."/>
            <person name="Land M."/>
            <person name="Gilna P."/>
            <person name="Ivanova N."/>
            <person name="Kyrpides N."/>
            <person name="Culley D.E."/>
            <person name="McInerney M.J."/>
        </authorList>
    </citation>
    <scope>NUCLEOTIDE SEQUENCE [LARGE SCALE GENOMIC DNA]</scope>
    <source>
        <strain>ATCC 27890 / DSM 864 / NBRC 100397 / JF-1</strain>
    </source>
</reference>
<keyword id="KW-0210">Decarboxylase</keyword>
<keyword id="KW-0456">Lyase</keyword>
<keyword id="KW-0663">Pyridoxal phosphate</keyword>
<keyword id="KW-1185">Reference proteome</keyword>
<protein>
    <recommendedName>
        <fullName evidence="1">Probable L-tyrosine/L-aspartate decarboxylase</fullName>
        <shortName evidence="1">TDC/ADC</shortName>
        <ecNumber evidence="1">4.1.1.11</ecNumber>
        <ecNumber evidence="1">4.1.1.25</ecNumber>
    </recommendedName>
</protein>
<organism>
    <name type="scientific">Methanospirillum hungatei JF-1 (strain ATCC 27890 / DSM 864 / NBRC 100397 / JF-1)</name>
    <dbReference type="NCBI Taxonomy" id="323259"/>
    <lineage>
        <taxon>Archaea</taxon>
        <taxon>Methanobacteriati</taxon>
        <taxon>Methanobacteriota</taxon>
        <taxon>Stenosarchaea group</taxon>
        <taxon>Methanomicrobia</taxon>
        <taxon>Methanomicrobiales</taxon>
        <taxon>Methanospirillaceae</taxon>
        <taxon>Methanospirillum</taxon>
    </lineage>
</organism>
<proteinExistence type="inferred from homology"/>
<feature type="chain" id="PRO_0000293189" description="Probable L-tyrosine/L-aspartate decarboxylase">
    <location>
        <begin position="1"/>
        <end position="369"/>
    </location>
</feature>
<feature type="modified residue" description="N6-(pyridoxal phosphate)lysine" evidence="1">
    <location>
        <position position="224"/>
    </location>
</feature>
<sequence length="369" mass="40250">MDAEGLSTDELFCFLQAKRNEDFSYSHILSSMCTTPHPVAVQAHNLFMETNLGDPGLFPGTATLEDRLIRWFADLYHEPSAGGCTTSGGTESNIQVLRFCKKTKNVKEPNIIVPASAHFSFEKACGMMDIEMRVVPVDEQYRMKTDAAGELIDKNTCCIVGVAGTTEYGMTDPIPALGKLAEQEGVHLHVDAAFGGYVLPFLDDAPPFDFSVPGVGSIAVDPHKMGLSTIPSGVLMVRDERVFCNLLVETPYLTTKQAYSLTGTRPGASVAAAYAVMAYLGRKGMKALVTGCMENTRRMIEGMEAFGVHRKVTPDVNVATFEHVSVPSPWVVSYTRKGDLRIVCMPHVTRDVVEAFLSDFGESYVSHIS</sequence>
<accession>Q2FSD2</accession>
<name>MFNA_METHJ</name>
<gene>
    <name evidence="1" type="primary">mfnA</name>
    <name type="ordered locus">Mhun_2611</name>
</gene>
<dbReference type="EC" id="4.1.1.11" evidence="1"/>
<dbReference type="EC" id="4.1.1.25" evidence="1"/>
<dbReference type="EMBL" id="CP000254">
    <property type="protein sequence ID" value="ABD42308.1"/>
    <property type="molecule type" value="Genomic_DNA"/>
</dbReference>
<dbReference type="RefSeq" id="WP_011449565.1">
    <property type="nucleotide sequence ID" value="NC_007796.1"/>
</dbReference>
<dbReference type="SMR" id="Q2FSD2"/>
<dbReference type="FunCoup" id="Q2FSD2">
    <property type="interactions" value="174"/>
</dbReference>
<dbReference type="STRING" id="323259.Mhun_2611"/>
<dbReference type="EnsemblBacteria" id="ABD42308">
    <property type="protein sequence ID" value="ABD42308"/>
    <property type="gene ID" value="Mhun_2611"/>
</dbReference>
<dbReference type="GeneID" id="3922321"/>
<dbReference type="KEGG" id="mhu:Mhun_2611"/>
<dbReference type="eggNOG" id="arCOG00027">
    <property type="taxonomic scope" value="Archaea"/>
</dbReference>
<dbReference type="HOGENOM" id="CLU_028929_2_1_2"/>
<dbReference type="InParanoid" id="Q2FSD2"/>
<dbReference type="OrthoDB" id="56891at2157"/>
<dbReference type="UniPathway" id="UPA00080"/>
<dbReference type="UniPathway" id="UPA00241"/>
<dbReference type="Proteomes" id="UP000001941">
    <property type="component" value="Chromosome"/>
</dbReference>
<dbReference type="GO" id="GO:0004068">
    <property type="term" value="F:aspartate 1-decarboxylase activity"/>
    <property type="evidence" value="ECO:0007669"/>
    <property type="project" value="UniProtKB-UniRule"/>
</dbReference>
<dbReference type="GO" id="GO:0030170">
    <property type="term" value="F:pyridoxal phosphate binding"/>
    <property type="evidence" value="ECO:0007669"/>
    <property type="project" value="UniProtKB-UniRule"/>
</dbReference>
<dbReference type="GO" id="GO:0004837">
    <property type="term" value="F:tyrosine decarboxylase activity"/>
    <property type="evidence" value="ECO:0007669"/>
    <property type="project" value="UniProtKB-UniRule"/>
</dbReference>
<dbReference type="GO" id="GO:0019752">
    <property type="term" value="P:carboxylic acid metabolic process"/>
    <property type="evidence" value="ECO:0007669"/>
    <property type="project" value="InterPro"/>
</dbReference>
<dbReference type="GO" id="GO:0015937">
    <property type="term" value="P:coenzyme A biosynthetic process"/>
    <property type="evidence" value="ECO:0007669"/>
    <property type="project" value="UniProtKB-UniRule"/>
</dbReference>
<dbReference type="GO" id="GO:2001120">
    <property type="term" value="P:methanofuran biosynthetic process"/>
    <property type="evidence" value="ECO:0007669"/>
    <property type="project" value="UniProtKB-UniRule"/>
</dbReference>
<dbReference type="Gene3D" id="3.90.1150.10">
    <property type="entry name" value="Aspartate Aminotransferase, domain 1"/>
    <property type="match status" value="1"/>
</dbReference>
<dbReference type="Gene3D" id="3.40.640.10">
    <property type="entry name" value="Type I PLP-dependent aspartate aminotransferase-like (Major domain)"/>
    <property type="match status" value="1"/>
</dbReference>
<dbReference type="HAMAP" id="MF_01610">
    <property type="entry name" value="MfnA_decarbox"/>
    <property type="match status" value="1"/>
</dbReference>
<dbReference type="InterPro" id="IPR050477">
    <property type="entry name" value="GrpII_AminoAcid_Decarb"/>
</dbReference>
<dbReference type="InterPro" id="IPR020931">
    <property type="entry name" value="MfnA"/>
</dbReference>
<dbReference type="InterPro" id="IPR002129">
    <property type="entry name" value="PyrdxlP-dep_de-COase"/>
</dbReference>
<dbReference type="InterPro" id="IPR015424">
    <property type="entry name" value="PyrdxlP-dep_Trfase"/>
</dbReference>
<dbReference type="InterPro" id="IPR015421">
    <property type="entry name" value="PyrdxlP-dep_Trfase_major"/>
</dbReference>
<dbReference type="InterPro" id="IPR015422">
    <property type="entry name" value="PyrdxlP-dep_Trfase_small"/>
</dbReference>
<dbReference type="NCBIfam" id="TIGR03812">
    <property type="entry name" value="tyr_de_CO2_Arch"/>
    <property type="match status" value="1"/>
</dbReference>
<dbReference type="PANTHER" id="PTHR42735">
    <property type="match status" value="1"/>
</dbReference>
<dbReference type="PANTHER" id="PTHR42735:SF6">
    <property type="entry name" value="SPHINGOSINE-1-PHOSPHATE LYASE 1"/>
    <property type="match status" value="1"/>
</dbReference>
<dbReference type="Pfam" id="PF00282">
    <property type="entry name" value="Pyridoxal_deC"/>
    <property type="match status" value="1"/>
</dbReference>
<dbReference type="SUPFAM" id="SSF53383">
    <property type="entry name" value="PLP-dependent transferases"/>
    <property type="match status" value="1"/>
</dbReference>
<evidence type="ECO:0000255" key="1">
    <source>
        <dbReference type="HAMAP-Rule" id="MF_01610"/>
    </source>
</evidence>